<organism>
    <name type="scientific">Cairina moschata</name>
    <name type="common">Muscovy duck</name>
    <dbReference type="NCBI Taxonomy" id="8855"/>
    <lineage>
        <taxon>Eukaryota</taxon>
        <taxon>Metazoa</taxon>
        <taxon>Chordata</taxon>
        <taxon>Craniata</taxon>
        <taxon>Vertebrata</taxon>
        <taxon>Euteleostomi</taxon>
        <taxon>Archelosauria</taxon>
        <taxon>Archosauria</taxon>
        <taxon>Dinosauria</taxon>
        <taxon>Saurischia</taxon>
        <taxon>Theropoda</taxon>
        <taxon>Coelurosauria</taxon>
        <taxon>Aves</taxon>
        <taxon>Neognathae</taxon>
        <taxon>Galloanserae</taxon>
        <taxon>Anseriformes</taxon>
        <taxon>Anatidae</taxon>
        <taxon>Anatinae</taxon>
        <taxon>Cairina</taxon>
    </lineage>
</organism>
<keyword id="KW-0007">Acetylation</keyword>
<keyword id="KW-0158">Chromosome</keyword>
<keyword id="KW-0238">DNA-binding</keyword>
<keyword id="KW-1017">Isopeptide bond</keyword>
<keyword id="KW-0544">Nucleosome core</keyword>
<keyword id="KW-0539">Nucleus</keyword>
<keyword id="KW-0597">Phosphoprotein</keyword>
<keyword id="KW-1185">Reference proteome</keyword>
<keyword id="KW-0832">Ubl conjugation</keyword>
<evidence type="ECO:0000250" key="1"/>
<evidence type="ECO:0000250" key="2">
    <source>
        <dbReference type="UniProtKB" id="P06900"/>
    </source>
</evidence>
<evidence type="ECO:0000250" key="3">
    <source>
        <dbReference type="UniProtKB" id="P0C1H4"/>
    </source>
</evidence>
<evidence type="ECO:0000250" key="4">
    <source>
        <dbReference type="UniProtKB" id="P33778"/>
    </source>
</evidence>
<evidence type="ECO:0000256" key="5">
    <source>
        <dbReference type="SAM" id="MobiDB-lite"/>
    </source>
</evidence>
<evidence type="ECO:0000305" key="6"/>
<reference key="1">
    <citation type="journal article" date="1989" name="J. Mol. Evol.">
        <title>Conserved organization of an avian histone gene cluster with inverted duplications of H3 and H4 genes.</title>
        <authorList>
            <person name="Toenjes R."/>
            <person name="Munk K."/>
            <person name="Doenecke D."/>
        </authorList>
    </citation>
    <scope>NUCLEOTIDE SEQUENCE [GENOMIC DNA]</scope>
</reference>
<dbReference type="EMBL" id="X14731">
    <property type="protein sequence ID" value="CAA32853.1"/>
    <property type="molecule type" value="Genomic_DNA"/>
</dbReference>
<dbReference type="PIR" id="I50458">
    <property type="entry name" value="I50458"/>
</dbReference>
<dbReference type="SMR" id="P14001"/>
<dbReference type="Proteomes" id="UP000694556">
    <property type="component" value="Unplaced"/>
</dbReference>
<dbReference type="GO" id="GO:0000786">
    <property type="term" value="C:nucleosome"/>
    <property type="evidence" value="ECO:0007669"/>
    <property type="project" value="UniProtKB-KW"/>
</dbReference>
<dbReference type="GO" id="GO:0005634">
    <property type="term" value="C:nucleus"/>
    <property type="evidence" value="ECO:0007669"/>
    <property type="project" value="UniProtKB-SubCell"/>
</dbReference>
<dbReference type="GO" id="GO:0003677">
    <property type="term" value="F:DNA binding"/>
    <property type="evidence" value="ECO:0007669"/>
    <property type="project" value="UniProtKB-KW"/>
</dbReference>
<dbReference type="GO" id="GO:0046982">
    <property type="term" value="F:protein heterodimerization activity"/>
    <property type="evidence" value="ECO:0007669"/>
    <property type="project" value="InterPro"/>
</dbReference>
<dbReference type="GO" id="GO:0030527">
    <property type="term" value="F:structural constituent of chromatin"/>
    <property type="evidence" value="ECO:0007669"/>
    <property type="project" value="InterPro"/>
</dbReference>
<dbReference type="CDD" id="cd22910">
    <property type="entry name" value="HFD_H2B"/>
    <property type="match status" value="1"/>
</dbReference>
<dbReference type="FunFam" id="1.10.20.10:FF:000003">
    <property type="entry name" value="Histone H2B"/>
    <property type="match status" value="1"/>
</dbReference>
<dbReference type="Gene3D" id="1.10.20.10">
    <property type="entry name" value="Histone, subunit A"/>
    <property type="match status" value="1"/>
</dbReference>
<dbReference type="InterPro" id="IPR009072">
    <property type="entry name" value="Histone-fold"/>
</dbReference>
<dbReference type="InterPro" id="IPR007125">
    <property type="entry name" value="Histone_H2A/H2B/H3"/>
</dbReference>
<dbReference type="InterPro" id="IPR000558">
    <property type="entry name" value="Histone_H2B"/>
</dbReference>
<dbReference type="InterPro" id="IPR055333">
    <property type="entry name" value="HISTONE_H2B_site"/>
</dbReference>
<dbReference type="PANTHER" id="PTHR23428">
    <property type="entry name" value="HISTONE H2B"/>
    <property type="match status" value="1"/>
</dbReference>
<dbReference type="Pfam" id="PF00125">
    <property type="entry name" value="Histone"/>
    <property type="match status" value="1"/>
</dbReference>
<dbReference type="PRINTS" id="PR00621">
    <property type="entry name" value="HISTONEH2B"/>
</dbReference>
<dbReference type="SMART" id="SM00427">
    <property type="entry name" value="H2B"/>
    <property type="match status" value="1"/>
</dbReference>
<dbReference type="SUPFAM" id="SSF47113">
    <property type="entry name" value="Histone-fold"/>
    <property type="match status" value="1"/>
</dbReference>
<dbReference type="PROSITE" id="PS00357">
    <property type="entry name" value="HISTONE_H2B"/>
    <property type="match status" value="1"/>
</dbReference>
<feature type="initiator methionine" description="Removed" evidence="1">
    <location>
        <position position="1"/>
    </location>
</feature>
<feature type="chain" id="PRO_0000071845" description="Histone H2B">
    <location>
        <begin position="2"/>
        <end position="126"/>
    </location>
</feature>
<feature type="region of interest" description="Disordered" evidence="5">
    <location>
        <begin position="1"/>
        <end position="36"/>
    </location>
</feature>
<feature type="compositionally biased region" description="Low complexity" evidence="5">
    <location>
        <begin position="1"/>
        <end position="12"/>
    </location>
</feature>
<feature type="compositionally biased region" description="Basic residues" evidence="5">
    <location>
        <begin position="13"/>
        <end position="34"/>
    </location>
</feature>
<feature type="modified residue" description="N6-acetyllysine" evidence="3">
    <location>
        <position position="6"/>
    </location>
</feature>
<feature type="modified residue" description="N6-acetyllysine" evidence="3">
    <location>
        <position position="13"/>
    </location>
</feature>
<feature type="modified residue" description="Phosphoserine" evidence="2">
    <location>
        <position position="15"/>
    </location>
</feature>
<feature type="modified residue" description="N6-acetyllysine" evidence="3">
    <location>
        <position position="16"/>
    </location>
</feature>
<feature type="modified residue" description="N6-acetyllysine" evidence="3">
    <location>
        <position position="21"/>
    </location>
</feature>
<feature type="cross-link" description="Glycyl lysine isopeptide (Lys-Gly) (interchain with G-Cter in ubiquitin)" evidence="3">
    <location>
        <position position="121"/>
    </location>
</feature>
<proteinExistence type="inferred from homology"/>
<protein>
    <recommendedName>
        <fullName>Histone H2B</fullName>
    </recommendedName>
</protein>
<sequence>MPEPAKSAPAPKKGSKKAVTKTQKKGDKKRKKSRKESYSIYVYKVLKQVHPDTGISSKAMGIMNSFVNDIFERIAGEASRLAHYNKRSTITSREIQTAVRSLLPGELAKHAVSEGTKAVTKYTSSK</sequence>
<comment type="function">
    <text>Core component of nucleosome. Nucleosomes wrap and compact DNA into chromatin, limiting DNA accessibility to the cellular machineries which require DNA as a template. Histones thereby play a central role in transcription regulation, DNA repair, DNA replication and chromosomal stability. DNA accessibility is regulated via a complex set of post-translational modifications of histones, also called histone code, and nucleosome remodeling.</text>
</comment>
<comment type="subunit">
    <text>The nucleosome is a histone octamer containing two molecules each of H2A, H2B, H3 and H4 assembled in one H3-H4 heterotetramer and two H2A-H2B heterodimers. The octamer wraps approximately 147 bp of DNA.</text>
</comment>
<comment type="subcellular location">
    <subcellularLocation>
        <location>Nucleus</location>
    </subcellularLocation>
    <subcellularLocation>
        <location>Chromosome</location>
    </subcellularLocation>
</comment>
<comment type="PTM">
    <text evidence="4">Monoubiquitination of Lys-121 by the RNF20/40 complex gives a specific tag for epigenetic transcriptional activation and is also prerequisite for histone H3 'Lys-4' and 'Lys-79' methylation.</text>
</comment>
<comment type="PTM">
    <text evidence="2">Phosphorylated on Ser-15 during apoptosis; which facilitates apoptotic chromatin condensation.</text>
</comment>
<comment type="similarity">
    <text evidence="6">Belongs to the histone H2B family.</text>
</comment>
<accession>P14001</accession>
<name>H2B_CAIMO</name>